<proteinExistence type="inferred from homology"/>
<evidence type="ECO:0000255" key="1">
    <source>
        <dbReference type="HAMAP-Rule" id="MF_00625"/>
    </source>
</evidence>
<evidence type="ECO:0000305" key="2"/>
<comment type="function">
    <text evidence="1">Synthesizes selenophosphate from selenide and ATP.</text>
</comment>
<comment type="catalytic activity">
    <reaction evidence="1">
        <text>hydrogenselenide + ATP + H2O = selenophosphate + AMP + phosphate + 2 H(+)</text>
        <dbReference type="Rhea" id="RHEA:18737"/>
        <dbReference type="ChEBI" id="CHEBI:15377"/>
        <dbReference type="ChEBI" id="CHEBI:15378"/>
        <dbReference type="ChEBI" id="CHEBI:16144"/>
        <dbReference type="ChEBI" id="CHEBI:29317"/>
        <dbReference type="ChEBI" id="CHEBI:30616"/>
        <dbReference type="ChEBI" id="CHEBI:43474"/>
        <dbReference type="ChEBI" id="CHEBI:456215"/>
        <dbReference type="EC" id="2.7.9.3"/>
    </reaction>
</comment>
<comment type="cofactor">
    <cofactor evidence="1">
        <name>Mg(2+)</name>
        <dbReference type="ChEBI" id="CHEBI:18420"/>
    </cofactor>
    <text evidence="1">Binds 1 Mg(2+) ion per monomer.</text>
</comment>
<comment type="subunit">
    <text evidence="1">Homodimer.</text>
</comment>
<comment type="similarity">
    <text evidence="1">Belongs to the selenophosphate synthase 1 family. Class I subfamily.</text>
</comment>
<comment type="sequence caution" evidence="2">
    <conflict type="erroneous initiation">
        <sequence resource="EMBL-CDS" id="AAN80626"/>
    </conflict>
</comment>
<reference key="1">
    <citation type="journal article" date="2002" name="Proc. Natl. Acad. Sci. U.S.A.">
        <title>Extensive mosaic structure revealed by the complete genome sequence of uropathogenic Escherichia coli.</title>
        <authorList>
            <person name="Welch R.A."/>
            <person name="Burland V."/>
            <person name="Plunkett G. III"/>
            <person name="Redford P."/>
            <person name="Roesch P."/>
            <person name="Rasko D."/>
            <person name="Buckles E.L."/>
            <person name="Liou S.-R."/>
            <person name="Boutin A."/>
            <person name="Hackett J."/>
            <person name="Stroud D."/>
            <person name="Mayhew G.F."/>
            <person name="Rose D.J."/>
            <person name="Zhou S."/>
            <person name="Schwartz D.C."/>
            <person name="Perna N.T."/>
            <person name="Mobley H.L.T."/>
            <person name="Donnenberg M.S."/>
            <person name="Blattner F.R."/>
        </authorList>
    </citation>
    <scope>NUCLEOTIDE SEQUENCE [LARGE SCALE GENOMIC DNA]</scope>
    <source>
        <strain>CFT073 / ATCC 700928 / UPEC</strain>
    </source>
</reference>
<accession>P66793</accession>
<accession>Q8FGY3</accession>
<accession>Q8XDW6</accession>
<name>SELD_ECOL6</name>
<dbReference type="EC" id="2.7.9.3" evidence="1"/>
<dbReference type="EMBL" id="AE014075">
    <property type="protein sequence ID" value="AAN80626.1"/>
    <property type="status" value="ALT_INIT"/>
    <property type="molecule type" value="Genomic_DNA"/>
</dbReference>
<dbReference type="RefSeq" id="WP_001298241.1">
    <property type="nucleotide sequence ID" value="NZ_CP051263.1"/>
</dbReference>
<dbReference type="SMR" id="P66793"/>
<dbReference type="STRING" id="199310.c2167"/>
<dbReference type="GeneID" id="93775981"/>
<dbReference type="KEGG" id="ecc:c2167"/>
<dbReference type="eggNOG" id="COG0709">
    <property type="taxonomic scope" value="Bacteria"/>
</dbReference>
<dbReference type="HOGENOM" id="CLU_032859_0_1_6"/>
<dbReference type="Proteomes" id="UP000001410">
    <property type="component" value="Chromosome"/>
</dbReference>
<dbReference type="GO" id="GO:0005737">
    <property type="term" value="C:cytoplasm"/>
    <property type="evidence" value="ECO:0007669"/>
    <property type="project" value="TreeGrafter"/>
</dbReference>
<dbReference type="GO" id="GO:0005524">
    <property type="term" value="F:ATP binding"/>
    <property type="evidence" value="ECO:0007669"/>
    <property type="project" value="UniProtKB-UniRule"/>
</dbReference>
<dbReference type="GO" id="GO:0000287">
    <property type="term" value="F:magnesium ion binding"/>
    <property type="evidence" value="ECO:0007669"/>
    <property type="project" value="UniProtKB-UniRule"/>
</dbReference>
<dbReference type="GO" id="GO:0004756">
    <property type="term" value="F:selenide, water dikinase activity"/>
    <property type="evidence" value="ECO:0007669"/>
    <property type="project" value="UniProtKB-UniRule"/>
</dbReference>
<dbReference type="GO" id="GO:0016260">
    <property type="term" value="P:selenocysteine biosynthetic process"/>
    <property type="evidence" value="ECO:0007669"/>
    <property type="project" value="InterPro"/>
</dbReference>
<dbReference type="CDD" id="cd02195">
    <property type="entry name" value="SelD"/>
    <property type="match status" value="1"/>
</dbReference>
<dbReference type="FunFam" id="3.30.1330.10:FF:000003">
    <property type="entry name" value="Selenide, water dikinase"/>
    <property type="match status" value="1"/>
</dbReference>
<dbReference type="FunFam" id="3.90.650.10:FF:000004">
    <property type="entry name" value="Selenide, water dikinase"/>
    <property type="match status" value="1"/>
</dbReference>
<dbReference type="Gene3D" id="3.90.650.10">
    <property type="entry name" value="PurM-like C-terminal domain"/>
    <property type="match status" value="1"/>
</dbReference>
<dbReference type="Gene3D" id="3.30.1330.10">
    <property type="entry name" value="PurM-like, N-terminal domain"/>
    <property type="match status" value="1"/>
</dbReference>
<dbReference type="HAMAP" id="MF_00625">
    <property type="entry name" value="SelD"/>
    <property type="match status" value="1"/>
</dbReference>
<dbReference type="InterPro" id="IPR010918">
    <property type="entry name" value="PurM-like_C_dom"/>
</dbReference>
<dbReference type="InterPro" id="IPR036676">
    <property type="entry name" value="PurM-like_C_sf"/>
</dbReference>
<dbReference type="InterPro" id="IPR016188">
    <property type="entry name" value="PurM-like_N"/>
</dbReference>
<dbReference type="InterPro" id="IPR036921">
    <property type="entry name" value="PurM-like_N_sf"/>
</dbReference>
<dbReference type="InterPro" id="IPR023061">
    <property type="entry name" value="SelD_I"/>
</dbReference>
<dbReference type="InterPro" id="IPR004536">
    <property type="entry name" value="SPS/SelD"/>
</dbReference>
<dbReference type="NCBIfam" id="NF002098">
    <property type="entry name" value="PRK00943.1"/>
    <property type="match status" value="1"/>
</dbReference>
<dbReference type="NCBIfam" id="TIGR00476">
    <property type="entry name" value="selD"/>
    <property type="match status" value="1"/>
</dbReference>
<dbReference type="PANTHER" id="PTHR10256:SF0">
    <property type="entry name" value="INACTIVE SELENIDE, WATER DIKINASE-LIKE PROTEIN-RELATED"/>
    <property type="match status" value="1"/>
</dbReference>
<dbReference type="PANTHER" id="PTHR10256">
    <property type="entry name" value="SELENIDE, WATER DIKINASE"/>
    <property type="match status" value="1"/>
</dbReference>
<dbReference type="Pfam" id="PF00586">
    <property type="entry name" value="AIRS"/>
    <property type="match status" value="1"/>
</dbReference>
<dbReference type="Pfam" id="PF02769">
    <property type="entry name" value="AIRS_C"/>
    <property type="match status" value="1"/>
</dbReference>
<dbReference type="PIRSF" id="PIRSF036407">
    <property type="entry name" value="Selenphspht_syn"/>
    <property type="match status" value="1"/>
</dbReference>
<dbReference type="SUPFAM" id="SSF56042">
    <property type="entry name" value="PurM C-terminal domain-like"/>
    <property type="match status" value="1"/>
</dbReference>
<dbReference type="SUPFAM" id="SSF55326">
    <property type="entry name" value="PurM N-terminal domain-like"/>
    <property type="match status" value="1"/>
</dbReference>
<protein>
    <recommendedName>
        <fullName evidence="1">Selenide, water dikinase</fullName>
        <ecNumber evidence="1">2.7.9.3</ecNumber>
    </recommendedName>
    <alternativeName>
        <fullName evidence="1">Selenium donor protein</fullName>
    </alternativeName>
    <alternativeName>
        <fullName evidence="1">Selenophosphate synthase</fullName>
    </alternativeName>
</protein>
<feature type="chain" id="PRO_0000127621" description="Selenide, water dikinase">
    <location>
        <begin position="1"/>
        <end position="347"/>
    </location>
</feature>
<feature type="active site" evidence="1">
    <location>
        <position position="17"/>
    </location>
</feature>
<feature type="binding site" description="in other chain" evidence="1">
    <location>
        <position position="20"/>
    </location>
    <ligand>
        <name>ATP</name>
        <dbReference type="ChEBI" id="CHEBI:30616"/>
        <note>ligand shared between dimeric partners</note>
    </ligand>
</feature>
<feature type="binding site" description="in other chain" evidence="1">
    <location>
        <begin position="48"/>
        <end position="50"/>
    </location>
    <ligand>
        <name>ATP</name>
        <dbReference type="ChEBI" id="CHEBI:30616"/>
        <note>ligand shared between dimeric partners</note>
    </ligand>
</feature>
<feature type="binding site" evidence="1">
    <location>
        <position position="51"/>
    </location>
    <ligand>
        <name>Mg(2+)</name>
        <dbReference type="ChEBI" id="CHEBI:18420"/>
    </ligand>
</feature>
<feature type="binding site" description="in other chain" evidence="1">
    <location>
        <position position="68"/>
    </location>
    <ligand>
        <name>ATP</name>
        <dbReference type="ChEBI" id="CHEBI:30616"/>
        <note>ligand shared between dimeric partners</note>
    </ligand>
</feature>
<feature type="binding site" description="in other chain" evidence="1">
    <location>
        <position position="91"/>
    </location>
    <ligand>
        <name>ATP</name>
        <dbReference type="ChEBI" id="CHEBI:30616"/>
        <note>ligand shared between dimeric partners</note>
    </ligand>
</feature>
<feature type="binding site" evidence="1">
    <location>
        <position position="91"/>
    </location>
    <ligand>
        <name>Mg(2+)</name>
        <dbReference type="ChEBI" id="CHEBI:18420"/>
    </ligand>
</feature>
<feature type="binding site" evidence="1">
    <location>
        <begin position="139"/>
        <end position="141"/>
    </location>
    <ligand>
        <name>ATP</name>
        <dbReference type="ChEBI" id="CHEBI:30616"/>
        <note>ligand shared between dimeric partners</note>
    </ligand>
</feature>
<feature type="binding site" evidence="1">
    <location>
        <position position="227"/>
    </location>
    <ligand>
        <name>Mg(2+)</name>
        <dbReference type="ChEBI" id="CHEBI:18420"/>
    </ligand>
</feature>
<feature type="site" description="Important for catalytic activity" evidence="1">
    <location>
        <position position="20"/>
    </location>
</feature>
<keyword id="KW-0067">ATP-binding</keyword>
<keyword id="KW-0418">Kinase</keyword>
<keyword id="KW-0460">Magnesium</keyword>
<keyword id="KW-0479">Metal-binding</keyword>
<keyword id="KW-0547">Nucleotide-binding</keyword>
<keyword id="KW-1185">Reference proteome</keyword>
<keyword id="KW-0711">Selenium</keyword>
<keyword id="KW-0808">Transferase</keyword>
<gene>
    <name evidence="1" type="primary">selD</name>
    <name type="ordered locus">c2167</name>
</gene>
<sequence>MSENSIRLTQYSHGAGCGCKISPKVLETILHSEQAKFVDPNLLVGNETRDDAAVYDLGNGTSVISTTDFFMPIVDNPFDFGRIAATNAISDIFAMGGKPIMAIAILGWPINKLSPEIAREVTEGGRYACRQAGIALAGGHSIDAPEPIFGLAVTGIVPTERVKKNSTAQAGCKLFLTKPLGIGVLTTAEKKSLLKPEHQGLATEVMCRMNIAGASFANIEGVKAMTDVTGFGLLGHLSEMCQGAGVQARVDYDAIPKLPGVEEYIKLGAVPGGTERNFASYGHLMGEMPREVRDLLCDPQTSGGLLLAVMPEAENEVKATAAEFGIELTAIGELVPARGGRAMVEIR</sequence>
<organism>
    <name type="scientific">Escherichia coli O6:H1 (strain CFT073 / ATCC 700928 / UPEC)</name>
    <dbReference type="NCBI Taxonomy" id="199310"/>
    <lineage>
        <taxon>Bacteria</taxon>
        <taxon>Pseudomonadati</taxon>
        <taxon>Pseudomonadota</taxon>
        <taxon>Gammaproteobacteria</taxon>
        <taxon>Enterobacterales</taxon>
        <taxon>Enterobacteriaceae</taxon>
        <taxon>Escherichia</taxon>
    </lineage>
</organism>